<accession>A6KWM1</accession>
<proteinExistence type="inferred from homology"/>
<feature type="signal peptide" evidence="2">
    <location>
        <begin position="1"/>
        <end position="18"/>
    </location>
</feature>
<feature type="chain" id="PRO_0000348556" description="Glycosyl hydrolase family 109 protein 4">
    <location>
        <begin position="19"/>
        <end position="516"/>
    </location>
</feature>
<feature type="binding site" evidence="1">
    <location>
        <begin position="76"/>
        <end position="77"/>
    </location>
    <ligand>
        <name>NAD(+)</name>
        <dbReference type="ChEBI" id="CHEBI:57540"/>
    </ligand>
</feature>
<feature type="binding site" evidence="1">
    <location>
        <position position="98"/>
    </location>
    <ligand>
        <name>NAD(+)</name>
        <dbReference type="ChEBI" id="CHEBI:57540"/>
    </ligand>
</feature>
<feature type="binding site" evidence="1">
    <location>
        <begin position="146"/>
        <end position="149"/>
    </location>
    <ligand>
        <name>NAD(+)</name>
        <dbReference type="ChEBI" id="CHEBI:57540"/>
    </ligand>
</feature>
<feature type="binding site" evidence="1">
    <location>
        <begin position="166"/>
        <end position="167"/>
    </location>
    <ligand>
        <name>NAD(+)</name>
        <dbReference type="ChEBI" id="CHEBI:57540"/>
    </ligand>
</feature>
<feature type="binding site" evidence="1">
    <location>
        <position position="195"/>
    </location>
    <ligand>
        <name>NAD(+)</name>
        <dbReference type="ChEBI" id="CHEBI:57540"/>
    </ligand>
</feature>
<feature type="binding site" evidence="1">
    <location>
        <position position="224"/>
    </location>
    <ligand>
        <name>substrate</name>
    </ligand>
</feature>
<feature type="binding site" evidence="1">
    <location>
        <position position="247"/>
    </location>
    <ligand>
        <name>substrate</name>
    </ligand>
</feature>
<feature type="binding site" evidence="1">
    <location>
        <begin position="259"/>
        <end position="262"/>
    </location>
    <ligand>
        <name>substrate</name>
    </ligand>
</feature>
<feature type="binding site" evidence="1">
    <location>
        <position position="259"/>
    </location>
    <ligand>
        <name>NAD(+)</name>
        <dbReference type="ChEBI" id="CHEBI:57540"/>
    </ligand>
</feature>
<feature type="binding site" evidence="1">
    <location>
        <position position="337"/>
    </location>
    <ligand>
        <name>substrate</name>
    </ligand>
</feature>
<feature type="lipid moiety-binding region" description="N-palmitoyl cysteine" evidence="2">
    <location>
        <position position="19"/>
    </location>
</feature>
<feature type="lipid moiety-binding region" description="S-diacylglycerol cysteine" evidence="2">
    <location>
        <position position="19"/>
    </location>
</feature>
<gene>
    <name type="ordered locus">BVU_0105</name>
</gene>
<protein>
    <recommendedName>
        <fullName>Glycosyl hydrolase family 109 protein 4</fullName>
        <ecNumber>3.2.1.-</ecNumber>
    </recommendedName>
</protein>
<organism>
    <name type="scientific">Phocaeicola vulgatus (strain ATCC 8482 / DSM 1447 / JCM 5826 / CCUG 4940 / NBRC 14291 / NCTC 11154)</name>
    <name type="common">Bacteroides vulgatus</name>
    <dbReference type="NCBI Taxonomy" id="435590"/>
    <lineage>
        <taxon>Bacteria</taxon>
        <taxon>Pseudomonadati</taxon>
        <taxon>Bacteroidota</taxon>
        <taxon>Bacteroidia</taxon>
        <taxon>Bacteroidales</taxon>
        <taxon>Bacteroidaceae</taxon>
        <taxon>Phocaeicola</taxon>
    </lineage>
</organism>
<sequence>MKKIKLLLVAGACVVLSACSPQAPTVHTTDKGTQWEWNEGTIVVKSPERPAGQKSVIGLTAPKMEVVRVGFVGLGMRGPGAVSRFTHIPGTQIVALCDYDPKRAEACQNILKKASMPKAAIYSGETGYEELCKRDDIDLVYIAADWLHHFPIAKCALENGKHVAIEVPSAMNLQECWDLVNLSETTRKHCFILENCCYDWFEMNTLNMAQNGVFGEVIRAQGAYIHNLSDFWDYYWKNGENDKLGWRLEFNMRHRGDVYATHGLGPVAQVLDIHRGDRMKTLTAMDTKSVVGKGLVEAKTGSECTNFRNGDHTTTMIRTENGKVIEIQHNVMTPQPYNRLYQLTGVKGFANKYPTEGYALGADQLSASGVQPKVDNLSSHGFLPQAEMDALVEKYQHPILKKYGEIAKEVGGHGGMDFIMDSRLVYCLQNGLPLDMDVYDLAEWCALAELGEISMDNNCAAVEFPDFTRGEWNVVKGYKHAYASPEEEQASMEKAKAFTAKLKERGAKEWATEADK</sequence>
<keyword id="KW-1003">Cell membrane</keyword>
<keyword id="KW-0326">Glycosidase</keyword>
<keyword id="KW-0378">Hydrolase</keyword>
<keyword id="KW-0449">Lipoprotein</keyword>
<keyword id="KW-0472">Membrane</keyword>
<keyword id="KW-0520">NAD</keyword>
<keyword id="KW-0564">Palmitate</keyword>
<keyword id="KW-0732">Signal</keyword>
<comment type="function">
    <text evidence="1">Glycosidase.</text>
</comment>
<comment type="cofactor">
    <cofactor evidence="1">
        <name>NAD(+)</name>
        <dbReference type="ChEBI" id="CHEBI:57540"/>
    </cofactor>
    <text evidence="1">Binds 1 NAD(+) per subunit. The NAD(+) cannot dissociate.</text>
</comment>
<comment type="subcellular location">
    <subcellularLocation>
        <location evidence="2">Cell membrane</location>
        <topology evidence="2">Lipid-anchor</topology>
    </subcellularLocation>
</comment>
<comment type="similarity">
    <text evidence="3">Belongs to the Gfo/Idh/MocA family. Glycosyl hydrolase 109 subfamily.</text>
</comment>
<dbReference type="EC" id="3.2.1.-"/>
<dbReference type="EMBL" id="CP000139">
    <property type="protein sequence ID" value="ABR37835.1"/>
    <property type="molecule type" value="Genomic_DNA"/>
</dbReference>
<dbReference type="RefSeq" id="WP_005843044.1">
    <property type="nucleotide sequence ID" value="NZ_JANSWM010000057.1"/>
</dbReference>
<dbReference type="SMR" id="A6KWM1"/>
<dbReference type="STRING" id="435590.BVU_0105"/>
<dbReference type="CAZy" id="GH109">
    <property type="family name" value="Glycoside Hydrolase Family 109"/>
</dbReference>
<dbReference type="PaxDb" id="435590-BVU_0105"/>
<dbReference type="GeneID" id="5301075"/>
<dbReference type="KEGG" id="bvu:BVU_0105"/>
<dbReference type="eggNOG" id="COG0673">
    <property type="taxonomic scope" value="Bacteria"/>
</dbReference>
<dbReference type="HOGENOM" id="CLU_046965_0_0_10"/>
<dbReference type="BioCyc" id="BVUL435590:G1G59-111-MONOMER"/>
<dbReference type="Proteomes" id="UP000002861">
    <property type="component" value="Chromosome"/>
</dbReference>
<dbReference type="GO" id="GO:0005886">
    <property type="term" value="C:plasma membrane"/>
    <property type="evidence" value="ECO:0007669"/>
    <property type="project" value="UniProtKB-SubCell"/>
</dbReference>
<dbReference type="GO" id="GO:0016798">
    <property type="term" value="F:hydrolase activity, acting on glycosyl bonds"/>
    <property type="evidence" value="ECO:0007669"/>
    <property type="project" value="UniProtKB-KW"/>
</dbReference>
<dbReference type="GO" id="GO:0000166">
    <property type="term" value="F:nucleotide binding"/>
    <property type="evidence" value="ECO:0007669"/>
    <property type="project" value="InterPro"/>
</dbReference>
<dbReference type="Gene3D" id="3.30.360.10">
    <property type="entry name" value="Dihydrodipicolinate Reductase, domain 2"/>
    <property type="match status" value="1"/>
</dbReference>
<dbReference type="Gene3D" id="3.40.50.720">
    <property type="entry name" value="NAD(P)-binding Rossmann-like Domain"/>
    <property type="match status" value="1"/>
</dbReference>
<dbReference type="InterPro" id="IPR000683">
    <property type="entry name" value="Gfo/Idh/MocA-like_OxRdtase_N"/>
</dbReference>
<dbReference type="InterPro" id="IPR050463">
    <property type="entry name" value="Gfo/Idh/MocA_oxidrdct_glycsds"/>
</dbReference>
<dbReference type="InterPro" id="IPR049303">
    <property type="entry name" value="Glyco_hydro_109_C"/>
</dbReference>
<dbReference type="InterPro" id="IPR036291">
    <property type="entry name" value="NAD(P)-bd_dom_sf"/>
</dbReference>
<dbReference type="PANTHER" id="PTHR43818">
    <property type="entry name" value="BCDNA.GH03377"/>
    <property type="match status" value="1"/>
</dbReference>
<dbReference type="PANTHER" id="PTHR43818:SF1">
    <property type="entry name" value="GLYCOSYL HYDROLASE FAMILY 109 PROTEIN"/>
    <property type="match status" value="1"/>
</dbReference>
<dbReference type="Pfam" id="PF01408">
    <property type="entry name" value="GFO_IDH_MocA"/>
    <property type="match status" value="1"/>
</dbReference>
<dbReference type="Pfam" id="PF21252">
    <property type="entry name" value="Glyco_hydro_109_C"/>
    <property type="match status" value="1"/>
</dbReference>
<dbReference type="SUPFAM" id="SSF55347">
    <property type="entry name" value="Glyceraldehyde-3-phosphate dehydrogenase-like, C-terminal domain"/>
    <property type="match status" value="1"/>
</dbReference>
<dbReference type="SUPFAM" id="SSF51735">
    <property type="entry name" value="NAD(P)-binding Rossmann-fold domains"/>
    <property type="match status" value="1"/>
</dbReference>
<dbReference type="PROSITE" id="PS51257">
    <property type="entry name" value="PROKAR_LIPOPROTEIN"/>
    <property type="match status" value="1"/>
</dbReference>
<reference key="1">
    <citation type="journal article" date="2007" name="PLoS Biol.">
        <title>Evolution of symbiotic bacteria in the distal human intestine.</title>
        <authorList>
            <person name="Xu J."/>
            <person name="Mahowald M.A."/>
            <person name="Ley R.E."/>
            <person name="Lozupone C.A."/>
            <person name="Hamady M."/>
            <person name="Martens E.C."/>
            <person name="Henrissat B."/>
            <person name="Coutinho P.M."/>
            <person name="Minx P."/>
            <person name="Latreille P."/>
            <person name="Cordum H."/>
            <person name="Van Brunt A."/>
            <person name="Kim K."/>
            <person name="Fulton R.S."/>
            <person name="Fulton L.A."/>
            <person name="Clifton S.W."/>
            <person name="Wilson R.K."/>
            <person name="Knight R.D."/>
            <person name="Gordon J.I."/>
        </authorList>
    </citation>
    <scope>NUCLEOTIDE SEQUENCE [LARGE SCALE GENOMIC DNA]</scope>
    <source>
        <strain>ATCC 8482 / DSM 1447 / JCM 5826 / CCUG 4940 / NBRC 14291 / NCTC 11154</strain>
    </source>
</reference>
<evidence type="ECO:0000250" key="1"/>
<evidence type="ECO:0000255" key="2">
    <source>
        <dbReference type="PROSITE-ProRule" id="PRU00303"/>
    </source>
</evidence>
<evidence type="ECO:0000305" key="3"/>
<name>G1094_PHOV8</name>